<reference key="1">
    <citation type="journal article" date="2011" name="PLoS Genet.">
        <title>Comparative genomic analysis of human fungal pathogens causing paracoccidioidomycosis.</title>
        <authorList>
            <person name="Desjardins C.A."/>
            <person name="Champion M.D."/>
            <person name="Holder J.W."/>
            <person name="Muszewska A."/>
            <person name="Goldberg J."/>
            <person name="Bailao A.M."/>
            <person name="Brigido M.M."/>
            <person name="Ferreira M.E."/>
            <person name="Garcia A.M."/>
            <person name="Grynberg M."/>
            <person name="Gujja S."/>
            <person name="Heiman D.I."/>
            <person name="Henn M.R."/>
            <person name="Kodira C.D."/>
            <person name="Leon-Narvaez H."/>
            <person name="Longo L.V.G."/>
            <person name="Ma L.-J."/>
            <person name="Malavazi I."/>
            <person name="Matsuo A.L."/>
            <person name="Morais F.V."/>
            <person name="Pereira M."/>
            <person name="Rodriguez-Brito S."/>
            <person name="Sakthikumar S."/>
            <person name="Salem-Izacc S.M."/>
            <person name="Sykes S.M."/>
            <person name="Teixeira M.M."/>
            <person name="Vallejo M.C."/>
            <person name="Walter M.E."/>
            <person name="Yandava C."/>
            <person name="Young S."/>
            <person name="Zeng Q."/>
            <person name="Zucker J."/>
            <person name="Felipe M.S."/>
            <person name="Goldman G.H."/>
            <person name="Haas B.J."/>
            <person name="McEwen J.G."/>
            <person name="Nino-Vega G."/>
            <person name="Puccia R."/>
            <person name="San-Blas G."/>
            <person name="Soares C.M."/>
            <person name="Birren B.W."/>
            <person name="Cuomo C.A."/>
        </authorList>
    </citation>
    <scope>NUCLEOTIDE SEQUENCE [LARGE SCALE GENOMIC DNA]</scope>
    <source>
        <strain>ATCC MYA-826 / Pb01</strain>
    </source>
</reference>
<accession>C1GUB6</accession>
<protein>
    <recommendedName>
        <fullName evidence="1">Small ribosomal subunit protein uS2</fullName>
    </recommendedName>
    <alternativeName>
        <fullName evidence="3">40S ribosomal protein S0</fullName>
    </alternativeName>
</protein>
<proteinExistence type="inferred from homology"/>
<dbReference type="EMBL" id="KN293995">
    <property type="protein sequence ID" value="EEH39922.1"/>
    <property type="molecule type" value="Genomic_DNA"/>
</dbReference>
<dbReference type="RefSeq" id="XP_002796223.1">
    <property type="nucleotide sequence ID" value="XM_002796177.2"/>
</dbReference>
<dbReference type="SMR" id="C1GUB6"/>
<dbReference type="STRING" id="502779.C1GUB6"/>
<dbReference type="GeneID" id="9099368"/>
<dbReference type="KEGG" id="pbl:PAAG_02111"/>
<dbReference type="VEuPathDB" id="FungiDB:PAAG_02111"/>
<dbReference type="eggNOG" id="KOG0830">
    <property type="taxonomic scope" value="Eukaryota"/>
</dbReference>
<dbReference type="HOGENOM" id="CLU_058171_0_1_1"/>
<dbReference type="OMA" id="VKNFFEP"/>
<dbReference type="OrthoDB" id="414863at2759"/>
<dbReference type="Proteomes" id="UP000002059">
    <property type="component" value="Partially assembled WGS sequence"/>
</dbReference>
<dbReference type="GO" id="GO:0022627">
    <property type="term" value="C:cytosolic small ribosomal subunit"/>
    <property type="evidence" value="ECO:0007669"/>
    <property type="project" value="UniProtKB-UniRule"/>
</dbReference>
<dbReference type="GO" id="GO:0003735">
    <property type="term" value="F:structural constituent of ribosome"/>
    <property type="evidence" value="ECO:0007669"/>
    <property type="project" value="UniProtKB-UniRule"/>
</dbReference>
<dbReference type="GO" id="GO:0000028">
    <property type="term" value="P:ribosomal small subunit assembly"/>
    <property type="evidence" value="ECO:0007669"/>
    <property type="project" value="UniProtKB-UniRule"/>
</dbReference>
<dbReference type="GO" id="GO:0006412">
    <property type="term" value="P:translation"/>
    <property type="evidence" value="ECO:0007669"/>
    <property type="project" value="UniProtKB-UniRule"/>
</dbReference>
<dbReference type="CDD" id="cd01425">
    <property type="entry name" value="RPS2"/>
    <property type="match status" value="1"/>
</dbReference>
<dbReference type="FunFam" id="3.40.50.10490:FF:000010">
    <property type="entry name" value="40S ribosomal protein S0"/>
    <property type="match status" value="1"/>
</dbReference>
<dbReference type="Gene3D" id="3.40.50.10490">
    <property type="entry name" value="Glucose-6-phosphate isomerase like protein, domain 1"/>
    <property type="match status" value="1"/>
</dbReference>
<dbReference type="HAMAP" id="MF_03015">
    <property type="entry name" value="Ribosomal_S2_euk"/>
    <property type="match status" value="1"/>
</dbReference>
<dbReference type="InterPro" id="IPR001865">
    <property type="entry name" value="Ribosomal_uS2"/>
</dbReference>
<dbReference type="InterPro" id="IPR032281">
    <property type="entry name" value="Ribosomal_uS2_C"/>
</dbReference>
<dbReference type="InterPro" id="IPR018130">
    <property type="entry name" value="Ribosomal_uS2_CS"/>
</dbReference>
<dbReference type="InterPro" id="IPR027498">
    <property type="entry name" value="Ribosomal_uS2_euk"/>
</dbReference>
<dbReference type="InterPro" id="IPR005707">
    <property type="entry name" value="Ribosomal_uS2_euk/arc"/>
</dbReference>
<dbReference type="InterPro" id="IPR023591">
    <property type="entry name" value="Ribosomal_uS2_flav_dom_sf"/>
</dbReference>
<dbReference type="NCBIfam" id="TIGR01012">
    <property type="entry name" value="uS2_euk_arch"/>
    <property type="match status" value="1"/>
</dbReference>
<dbReference type="PANTHER" id="PTHR11489">
    <property type="entry name" value="40S RIBOSOMAL PROTEIN SA"/>
    <property type="match status" value="1"/>
</dbReference>
<dbReference type="Pfam" id="PF16122">
    <property type="entry name" value="40S_SA_C"/>
    <property type="match status" value="1"/>
</dbReference>
<dbReference type="Pfam" id="PF00318">
    <property type="entry name" value="Ribosomal_S2"/>
    <property type="match status" value="2"/>
</dbReference>
<dbReference type="PRINTS" id="PR00395">
    <property type="entry name" value="RIBOSOMALS2"/>
</dbReference>
<dbReference type="SUPFAM" id="SSF52313">
    <property type="entry name" value="Ribosomal protein S2"/>
    <property type="match status" value="1"/>
</dbReference>
<dbReference type="PROSITE" id="PS00963">
    <property type="entry name" value="RIBOSOMAL_S2_2"/>
    <property type="match status" value="1"/>
</dbReference>
<name>RSSA_PARBA</name>
<gene>
    <name evidence="1" type="primary">RPS0</name>
    <name type="ORF">PAAG_02111</name>
</gene>
<organism>
    <name type="scientific">Paracoccidioides lutzii (strain ATCC MYA-826 / Pb01)</name>
    <name type="common">Paracoccidioides brasiliensis</name>
    <dbReference type="NCBI Taxonomy" id="502779"/>
    <lineage>
        <taxon>Eukaryota</taxon>
        <taxon>Fungi</taxon>
        <taxon>Dikarya</taxon>
        <taxon>Ascomycota</taxon>
        <taxon>Pezizomycotina</taxon>
        <taxon>Eurotiomycetes</taxon>
        <taxon>Eurotiomycetidae</taxon>
        <taxon>Onygenales</taxon>
        <taxon>Ajellomycetaceae</taxon>
        <taxon>Paracoccidioides</taxon>
    </lineage>
</organism>
<keyword id="KW-0963">Cytoplasm</keyword>
<keyword id="KW-1185">Reference proteome</keyword>
<keyword id="KW-0687">Ribonucleoprotein</keyword>
<keyword id="KW-0689">Ribosomal protein</keyword>
<sequence length="295" mass="31925">MAPSNLPPVFNATSQDIEMLLAAQCHLGSKNLQVHMEPYLWKTRPDGINVINIGKTWEKIVLAARIIAAIDNPADICVISARPYGQRAVLKFAAHTGAVAIAGRFTPGNFTNYITRSFKEPRLIIVTDPRTDSQAIKEASYVNIPVIALCDTDSPTEFVDVAIPTNNKGRHAIGLIWWMLAREVLRLRGTLANRETEWDVVVDLYFYRDPEAEENKEVEETKVPGAEEVGAGAIESGFVGDSWQAQATPGFSAGVAAPGTAVPGWEAEVSTDWAASSAPAAETLADPAADPSVKW</sequence>
<feature type="chain" id="PRO_0000389281" description="Small ribosomal subunit protein uS2">
    <location>
        <begin position="1"/>
        <end position="295"/>
    </location>
</feature>
<feature type="region of interest" description="Disordered" evidence="2">
    <location>
        <begin position="273"/>
        <end position="295"/>
    </location>
</feature>
<feature type="compositionally biased region" description="Low complexity" evidence="2">
    <location>
        <begin position="274"/>
        <end position="295"/>
    </location>
</feature>
<comment type="function">
    <text evidence="1">Required for the assembly and/or stability of the 40S ribosomal subunit. Required for the processing of the 20S rRNA-precursor to mature 18S rRNA in a late step of the maturation of 40S ribosomal subunits.</text>
</comment>
<comment type="subunit">
    <text evidence="1">Component of the small ribosomal subunit. Mature ribosomes consist of a small (40S) and a large (60S) subunit. The 40S subunit contains about 33 different proteins and 1 molecule of RNA (18S). The 60S subunit contains about 49 different proteins and 3 molecules of RNA (25S, 5.8S and 5S). Interacts with RPS21.</text>
</comment>
<comment type="subcellular location">
    <subcellularLocation>
        <location evidence="1">Cytoplasm</location>
    </subcellularLocation>
</comment>
<comment type="similarity">
    <text evidence="1">Belongs to the universal ribosomal protein uS2 family.</text>
</comment>
<evidence type="ECO:0000255" key="1">
    <source>
        <dbReference type="HAMAP-Rule" id="MF_03015"/>
    </source>
</evidence>
<evidence type="ECO:0000256" key="2">
    <source>
        <dbReference type="SAM" id="MobiDB-lite"/>
    </source>
</evidence>
<evidence type="ECO:0000305" key="3"/>